<proteinExistence type="inferred from homology"/>
<gene>
    <name evidence="1" type="primary">obg</name>
    <name type="ordered locus">SeAg_B3491</name>
</gene>
<organism>
    <name type="scientific">Salmonella agona (strain SL483)</name>
    <dbReference type="NCBI Taxonomy" id="454166"/>
    <lineage>
        <taxon>Bacteria</taxon>
        <taxon>Pseudomonadati</taxon>
        <taxon>Pseudomonadota</taxon>
        <taxon>Gammaproteobacteria</taxon>
        <taxon>Enterobacterales</taxon>
        <taxon>Enterobacteriaceae</taxon>
        <taxon>Salmonella</taxon>
    </lineage>
</organism>
<sequence>MKFVDEASILVVAGDGGNGCVSFRREKYIPKGGPDGGDGGDGGDVWMEADENLNTLIDYRFEKSFRAERGQNGASRDCTGKRGKDVTIKVPVGTRVIDQGTGETMGDMTKHGQRLLVAKGGWHGLGNTRFKSSVNRTPRQKTNGTPGDKRDLLLELMLLADVGMLGMPNAGKSTFIRAVSAAKPKVADYPFTTLVPSLGVVRMDSEKSFVVADIPGLIEGAAEGAGLGIRFLKHLERCRVLLHLIDIDPIDGSDPVENARIIIGELEKYSQDLAAKPRWLVFNKIDLMDKTEAEEKAKAIAEALGWEGKYYLISAASQLGVKDLCWDVMTFIIENPIAQAEEAKQPEKVEFMWDDYHRQQLAEVEEDADDDWDDDWDEDDEEGVEFIYKR</sequence>
<reference key="1">
    <citation type="journal article" date="2011" name="J. Bacteriol.">
        <title>Comparative genomics of 28 Salmonella enterica isolates: evidence for CRISPR-mediated adaptive sublineage evolution.</title>
        <authorList>
            <person name="Fricke W.F."/>
            <person name="Mammel M.K."/>
            <person name="McDermott P.F."/>
            <person name="Tartera C."/>
            <person name="White D.G."/>
            <person name="Leclerc J.E."/>
            <person name="Ravel J."/>
            <person name="Cebula T.A."/>
        </authorList>
    </citation>
    <scope>NUCLEOTIDE SEQUENCE [LARGE SCALE GENOMIC DNA]</scope>
    <source>
        <strain>SL483</strain>
    </source>
</reference>
<comment type="function">
    <text evidence="1">An essential GTPase which binds GTP, GDP and possibly (p)ppGpp with moderate affinity, with high nucleotide exchange rates and a fairly low GTP hydrolysis rate. Plays a role in control of the cell cycle, stress response, ribosome biogenesis and in those bacteria that undergo differentiation, in morphogenesis control.</text>
</comment>
<comment type="cofactor">
    <cofactor evidence="1">
        <name>Mg(2+)</name>
        <dbReference type="ChEBI" id="CHEBI:18420"/>
    </cofactor>
</comment>
<comment type="subunit">
    <text evidence="1">Monomer.</text>
</comment>
<comment type="subcellular location">
    <subcellularLocation>
        <location evidence="1">Cytoplasm</location>
    </subcellularLocation>
</comment>
<comment type="similarity">
    <text evidence="1">Belongs to the TRAFAC class OBG-HflX-like GTPase superfamily. OBG GTPase family.</text>
</comment>
<evidence type="ECO:0000255" key="1">
    <source>
        <dbReference type="HAMAP-Rule" id="MF_01454"/>
    </source>
</evidence>
<evidence type="ECO:0000255" key="2">
    <source>
        <dbReference type="PROSITE-ProRule" id="PRU01231"/>
    </source>
</evidence>
<evidence type="ECO:0000256" key="3">
    <source>
        <dbReference type="SAM" id="MobiDB-lite"/>
    </source>
</evidence>
<accession>B5F6V2</accession>
<feature type="chain" id="PRO_0000386219" description="GTPase Obg">
    <location>
        <begin position="1"/>
        <end position="390"/>
    </location>
</feature>
<feature type="domain" description="Obg" evidence="2">
    <location>
        <begin position="1"/>
        <end position="159"/>
    </location>
</feature>
<feature type="domain" description="OBG-type G" evidence="1">
    <location>
        <begin position="160"/>
        <end position="333"/>
    </location>
</feature>
<feature type="region of interest" description="Disordered" evidence="3">
    <location>
        <begin position="127"/>
        <end position="147"/>
    </location>
</feature>
<feature type="compositionally biased region" description="Polar residues" evidence="3">
    <location>
        <begin position="129"/>
        <end position="145"/>
    </location>
</feature>
<feature type="binding site" evidence="1">
    <location>
        <begin position="166"/>
        <end position="173"/>
    </location>
    <ligand>
        <name>GTP</name>
        <dbReference type="ChEBI" id="CHEBI:37565"/>
    </ligand>
</feature>
<feature type="binding site" evidence="1">
    <location>
        <position position="173"/>
    </location>
    <ligand>
        <name>Mg(2+)</name>
        <dbReference type="ChEBI" id="CHEBI:18420"/>
    </ligand>
</feature>
<feature type="binding site" evidence="1">
    <location>
        <begin position="191"/>
        <end position="195"/>
    </location>
    <ligand>
        <name>GTP</name>
        <dbReference type="ChEBI" id="CHEBI:37565"/>
    </ligand>
</feature>
<feature type="binding site" evidence="1">
    <location>
        <position position="193"/>
    </location>
    <ligand>
        <name>Mg(2+)</name>
        <dbReference type="ChEBI" id="CHEBI:18420"/>
    </ligand>
</feature>
<feature type="binding site" evidence="1">
    <location>
        <begin position="213"/>
        <end position="216"/>
    </location>
    <ligand>
        <name>GTP</name>
        <dbReference type="ChEBI" id="CHEBI:37565"/>
    </ligand>
</feature>
<feature type="binding site" evidence="1">
    <location>
        <begin position="283"/>
        <end position="286"/>
    </location>
    <ligand>
        <name>GTP</name>
        <dbReference type="ChEBI" id="CHEBI:37565"/>
    </ligand>
</feature>
<feature type="binding site" evidence="1">
    <location>
        <begin position="314"/>
        <end position="316"/>
    </location>
    <ligand>
        <name>GTP</name>
        <dbReference type="ChEBI" id="CHEBI:37565"/>
    </ligand>
</feature>
<protein>
    <recommendedName>
        <fullName evidence="1">GTPase Obg</fullName>
        <ecNumber evidence="1">3.6.5.-</ecNumber>
    </recommendedName>
    <alternativeName>
        <fullName evidence="1">GTP-binding protein Obg</fullName>
    </alternativeName>
</protein>
<keyword id="KW-0963">Cytoplasm</keyword>
<keyword id="KW-0342">GTP-binding</keyword>
<keyword id="KW-0378">Hydrolase</keyword>
<keyword id="KW-0460">Magnesium</keyword>
<keyword id="KW-0479">Metal-binding</keyword>
<keyword id="KW-0547">Nucleotide-binding</keyword>
<dbReference type="EC" id="3.6.5.-" evidence="1"/>
<dbReference type="EMBL" id="CP001138">
    <property type="protein sequence ID" value="ACH50705.1"/>
    <property type="molecule type" value="Genomic_DNA"/>
</dbReference>
<dbReference type="SMR" id="B5F6V2"/>
<dbReference type="KEGG" id="sea:SeAg_B3491"/>
<dbReference type="HOGENOM" id="CLU_011747_2_0_6"/>
<dbReference type="Proteomes" id="UP000008819">
    <property type="component" value="Chromosome"/>
</dbReference>
<dbReference type="GO" id="GO:0005737">
    <property type="term" value="C:cytoplasm"/>
    <property type="evidence" value="ECO:0007669"/>
    <property type="project" value="UniProtKB-SubCell"/>
</dbReference>
<dbReference type="GO" id="GO:0005525">
    <property type="term" value="F:GTP binding"/>
    <property type="evidence" value="ECO:0007669"/>
    <property type="project" value="UniProtKB-UniRule"/>
</dbReference>
<dbReference type="GO" id="GO:0003924">
    <property type="term" value="F:GTPase activity"/>
    <property type="evidence" value="ECO:0007669"/>
    <property type="project" value="UniProtKB-UniRule"/>
</dbReference>
<dbReference type="GO" id="GO:0000287">
    <property type="term" value="F:magnesium ion binding"/>
    <property type="evidence" value="ECO:0007669"/>
    <property type="project" value="InterPro"/>
</dbReference>
<dbReference type="GO" id="GO:0042254">
    <property type="term" value="P:ribosome biogenesis"/>
    <property type="evidence" value="ECO:0007669"/>
    <property type="project" value="UniProtKB-UniRule"/>
</dbReference>
<dbReference type="CDD" id="cd01898">
    <property type="entry name" value="Obg"/>
    <property type="match status" value="1"/>
</dbReference>
<dbReference type="FunFam" id="2.70.210.12:FF:000001">
    <property type="entry name" value="GTPase Obg"/>
    <property type="match status" value="1"/>
</dbReference>
<dbReference type="FunFam" id="3.40.50.300:FF:000185">
    <property type="entry name" value="GTPase Obg"/>
    <property type="match status" value="1"/>
</dbReference>
<dbReference type="Gene3D" id="2.70.210.12">
    <property type="entry name" value="GTP1/OBG domain"/>
    <property type="match status" value="1"/>
</dbReference>
<dbReference type="Gene3D" id="3.40.50.300">
    <property type="entry name" value="P-loop containing nucleotide triphosphate hydrolases"/>
    <property type="match status" value="1"/>
</dbReference>
<dbReference type="HAMAP" id="MF_01454">
    <property type="entry name" value="GTPase_Obg"/>
    <property type="match status" value="1"/>
</dbReference>
<dbReference type="InterPro" id="IPR031167">
    <property type="entry name" value="G_OBG"/>
</dbReference>
<dbReference type="InterPro" id="IPR006073">
    <property type="entry name" value="GTP-bd"/>
</dbReference>
<dbReference type="InterPro" id="IPR014100">
    <property type="entry name" value="GTP-bd_Obg/CgtA"/>
</dbReference>
<dbReference type="InterPro" id="IPR006074">
    <property type="entry name" value="GTP1-OBG_CS"/>
</dbReference>
<dbReference type="InterPro" id="IPR006169">
    <property type="entry name" value="GTP1_OBG_dom"/>
</dbReference>
<dbReference type="InterPro" id="IPR036726">
    <property type="entry name" value="GTP1_OBG_dom_sf"/>
</dbReference>
<dbReference type="InterPro" id="IPR045086">
    <property type="entry name" value="OBG_GTPase"/>
</dbReference>
<dbReference type="InterPro" id="IPR027417">
    <property type="entry name" value="P-loop_NTPase"/>
</dbReference>
<dbReference type="NCBIfam" id="TIGR02729">
    <property type="entry name" value="Obg_CgtA"/>
    <property type="match status" value="1"/>
</dbReference>
<dbReference type="NCBIfam" id="NF008955">
    <property type="entry name" value="PRK12297.1"/>
    <property type="match status" value="1"/>
</dbReference>
<dbReference type="NCBIfam" id="NF008956">
    <property type="entry name" value="PRK12299.1"/>
    <property type="match status" value="1"/>
</dbReference>
<dbReference type="PANTHER" id="PTHR11702">
    <property type="entry name" value="DEVELOPMENTALLY REGULATED GTP-BINDING PROTEIN-RELATED"/>
    <property type="match status" value="1"/>
</dbReference>
<dbReference type="PANTHER" id="PTHR11702:SF31">
    <property type="entry name" value="MITOCHONDRIAL RIBOSOME-ASSOCIATED GTPASE 2"/>
    <property type="match status" value="1"/>
</dbReference>
<dbReference type="Pfam" id="PF01018">
    <property type="entry name" value="GTP1_OBG"/>
    <property type="match status" value="1"/>
</dbReference>
<dbReference type="Pfam" id="PF01926">
    <property type="entry name" value="MMR_HSR1"/>
    <property type="match status" value="1"/>
</dbReference>
<dbReference type="PIRSF" id="PIRSF002401">
    <property type="entry name" value="GTP_bd_Obg/CgtA"/>
    <property type="match status" value="1"/>
</dbReference>
<dbReference type="PRINTS" id="PR00326">
    <property type="entry name" value="GTP1OBG"/>
</dbReference>
<dbReference type="SUPFAM" id="SSF82051">
    <property type="entry name" value="Obg GTP-binding protein N-terminal domain"/>
    <property type="match status" value="1"/>
</dbReference>
<dbReference type="SUPFAM" id="SSF52540">
    <property type="entry name" value="P-loop containing nucleoside triphosphate hydrolases"/>
    <property type="match status" value="1"/>
</dbReference>
<dbReference type="PROSITE" id="PS51710">
    <property type="entry name" value="G_OBG"/>
    <property type="match status" value="1"/>
</dbReference>
<dbReference type="PROSITE" id="PS00905">
    <property type="entry name" value="GTP1_OBG"/>
    <property type="match status" value="1"/>
</dbReference>
<dbReference type="PROSITE" id="PS51883">
    <property type="entry name" value="OBG"/>
    <property type="match status" value="1"/>
</dbReference>
<name>OBG_SALA4</name>